<keyword id="KW-0131">Cell cycle</keyword>
<keyword id="KW-0132">Cell division</keyword>
<keyword id="KW-1185">Reference proteome</keyword>
<keyword id="KW-0717">Septation</keyword>
<keyword id="KW-0749">Sporulation</keyword>
<comment type="function">
    <text evidence="1">Essential for sporulation. Interferes with or is a negative regulator of the pathway leading to asymmetric septation.</text>
</comment>
<comment type="similarity">
    <text evidence="1">Belongs to the SpoVG family.</text>
</comment>
<dbReference type="EMBL" id="AP006627">
    <property type="protein sequence ID" value="BAD62620.1"/>
    <property type="molecule type" value="Genomic_DNA"/>
</dbReference>
<dbReference type="RefSeq" id="WP_011244941.1">
    <property type="nucleotide sequence ID" value="NC_006582.1"/>
</dbReference>
<dbReference type="SMR" id="Q5WAC9"/>
<dbReference type="STRING" id="66692.ABC0077"/>
<dbReference type="GeneID" id="86924097"/>
<dbReference type="KEGG" id="bcl:ABC0077"/>
<dbReference type="eggNOG" id="COG2088">
    <property type="taxonomic scope" value="Bacteria"/>
</dbReference>
<dbReference type="HOGENOM" id="CLU_103669_2_1_9"/>
<dbReference type="OrthoDB" id="9796286at2"/>
<dbReference type="Proteomes" id="UP000001168">
    <property type="component" value="Chromosome"/>
</dbReference>
<dbReference type="GO" id="GO:0000917">
    <property type="term" value="P:division septum assembly"/>
    <property type="evidence" value="ECO:0007669"/>
    <property type="project" value="UniProtKB-KW"/>
</dbReference>
<dbReference type="GO" id="GO:0030435">
    <property type="term" value="P:sporulation resulting in formation of a cellular spore"/>
    <property type="evidence" value="ECO:0007669"/>
    <property type="project" value="UniProtKB-KW"/>
</dbReference>
<dbReference type="FunFam" id="3.30.1120.40:FF:000001">
    <property type="entry name" value="Putative septation protein SpoVG"/>
    <property type="match status" value="1"/>
</dbReference>
<dbReference type="Gene3D" id="3.30.1120.40">
    <property type="entry name" value="Stage V sporulation protein G"/>
    <property type="match status" value="1"/>
</dbReference>
<dbReference type="HAMAP" id="MF_00819">
    <property type="entry name" value="SpoVG"/>
    <property type="match status" value="1"/>
</dbReference>
<dbReference type="InterPro" id="IPR007170">
    <property type="entry name" value="SpoVG"/>
</dbReference>
<dbReference type="InterPro" id="IPR036751">
    <property type="entry name" value="SpoVG_sf"/>
</dbReference>
<dbReference type="NCBIfam" id="NF009749">
    <property type="entry name" value="PRK13259.1"/>
    <property type="match status" value="1"/>
</dbReference>
<dbReference type="PANTHER" id="PTHR38429">
    <property type="entry name" value="SEPTATION PROTEIN SPOVG-RELATED"/>
    <property type="match status" value="1"/>
</dbReference>
<dbReference type="PANTHER" id="PTHR38429:SF1">
    <property type="entry name" value="SEPTATION PROTEIN SPOVG-RELATED"/>
    <property type="match status" value="1"/>
</dbReference>
<dbReference type="Pfam" id="PF04026">
    <property type="entry name" value="SpoVG"/>
    <property type="match status" value="1"/>
</dbReference>
<dbReference type="SUPFAM" id="SSF160537">
    <property type="entry name" value="SpoVG-like"/>
    <property type="match status" value="1"/>
</dbReference>
<proteinExistence type="inferred from homology"/>
<gene>
    <name evidence="1" type="primary">spoVG</name>
    <name type="ordered locus">ABC0077</name>
</gene>
<sequence>MEITDVRLRRVHTEGRMRAIASITMDHEFVVHDIRVIDGNNGLFVAMPSKRTPDGEFRDIAHPISSKTREKIQIAVINEYERVGEYEDAPNYEEAGAS</sequence>
<name>SP5G_SHOC1</name>
<protein>
    <recommendedName>
        <fullName evidence="1">Putative septation protein SpoVG</fullName>
    </recommendedName>
    <alternativeName>
        <fullName evidence="1">Stage V sporulation protein G</fullName>
    </alternativeName>
</protein>
<organism>
    <name type="scientific">Shouchella clausii (strain KSM-K16)</name>
    <name type="common">Alkalihalobacillus clausii</name>
    <dbReference type="NCBI Taxonomy" id="66692"/>
    <lineage>
        <taxon>Bacteria</taxon>
        <taxon>Bacillati</taxon>
        <taxon>Bacillota</taxon>
        <taxon>Bacilli</taxon>
        <taxon>Bacillales</taxon>
        <taxon>Bacillaceae</taxon>
        <taxon>Shouchella</taxon>
    </lineage>
</organism>
<evidence type="ECO:0000255" key="1">
    <source>
        <dbReference type="HAMAP-Rule" id="MF_00819"/>
    </source>
</evidence>
<feature type="chain" id="PRO_0000157184" description="Putative septation protein SpoVG">
    <location>
        <begin position="1"/>
        <end position="98"/>
    </location>
</feature>
<reference key="1">
    <citation type="submission" date="2003-10" db="EMBL/GenBank/DDBJ databases">
        <title>The complete genome sequence of the alkaliphilic Bacillus clausii KSM-K16.</title>
        <authorList>
            <person name="Takaki Y."/>
            <person name="Kageyama Y."/>
            <person name="Shimamura S."/>
            <person name="Suzuki H."/>
            <person name="Nishi S."/>
            <person name="Hatada Y."/>
            <person name="Kawai S."/>
            <person name="Ito S."/>
            <person name="Horikoshi K."/>
        </authorList>
    </citation>
    <scope>NUCLEOTIDE SEQUENCE [LARGE SCALE GENOMIC DNA]</scope>
    <source>
        <strain>KSM-K16</strain>
    </source>
</reference>
<accession>Q5WAC9</accession>